<name>EI2BG_DICDI</name>
<feature type="chain" id="PRO_0000328030" description="Translation initiation factor eIF2B subunit gamma">
    <location>
        <begin position="1"/>
        <end position="440"/>
    </location>
</feature>
<proteinExistence type="inferred from homology"/>
<evidence type="ECO:0000250" key="1">
    <source>
        <dbReference type="UniProtKB" id="P56288"/>
    </source>
</evidence>
<evidence type="ECO:0000250" key="2">
    <source>
        <dbReference type="UniProtKB" id="Q9NR50"/>
    </source>
</evidence>
<evidence type="ECO:0000305" key="3"/>
<accession>Q54FQ8</accession>
<dbReference type="EMBL" id="AAFI02000166">
    <property type="protein sequence ID" value="EAL62097.1"/>
    <property type="molecule type" value="Genomic_DNA"/>
</dbReference>
<dbReference type="RefSeq" id="XP_635599.1">
    <property type="nucleotide sequence ID" value="XM_630507.1"/>
</dbReference>
<dbReference type="SMR" id="Q54FQ8"/>
<dbReference type="FunCoup" id="Q54FQ8">
    <property type="interactions" value="359"/>
</dbReference>
<dbReference type="STRING" id="44689.Q54FQ8"/>
<dbReference type="PaxDb" id="44689-DDB0234239"/>
<dbReference type="EnsemblProtists" id="EAL62097">
    <property type="protein sequence ID" value="EAL62097"/>
    <property type="gene ID" value="DDB_G0290693"/>
</dbReference>
<dbReference type="GeneID" id="8627780"/>
<dbReference type="KEGG" id="ddi:DDB_G0290693"/>
<dbReference type="dictyBase" id="DDB_G0290693">
    <property type="gene designation" value="eif2b3"/>
</dbReference>
<dbReference type="VEuPathDB" id="AmoebaDB:DDB_G0290693"/>
<dbReference type="eggNOG" id="KOG1462">
    <property type="taxonomic scope" value="Eukaryota"/>
</dbReference>
<dbReference type="HOGENOM" id="CLU_016743_0_0_1"/>
<dbReference type="InParanoid" id="Q54FQ8"/>
<dbReference type="OMA" id="NCVINPK"/>
<dbReference type="PhylomeDB" id="Q54FQ8"/>
<dbReference type="Reactome" id="R-DDI-72731">
    <property type="pathway name" value="Recycling of eIF2:GDP"/>
</dbReference>
<dbReference type="PRO" id="PR:Q54FQ8"/>
<dbReference type="Proteomes" id="UP000002195">
    <property type="component" value="Chromosome 5"/>
</dbReference>
<dbReference type="GO" id="GO:0005829">
    <property type="term" value="C:cytosol"/>
    <property type="evidence" value="ECO:0007669"/>
    <property type="project" value="UniProtKB-SubCell"/>
</dbReference>
<dbReference type="GO" id="GO:0005851">
    <property type="term" value="C:eukaryotic translation initiation factor 2B complex"/>
    <property type="evidence" value="ECO:0000250"/>
    <property type="project" value="UniProtKB"/>
</dbReference>
<dbReference type="GO" id="GO:0032045">
    <property type="term" value="C:guanyl-nucleotide exchange factor complex"/>
    <property type="evidence" value="ECO:0000318"/>
    <property type="project" value="GO_Central"/>
</dbReference>
<dbReference type="GO" id="GO:0005085">
    <property type="term" value="F:guanyl-nucleotide exchange factor activity"/>
    <property type="evidence" value="ECO:0000250"/>
    <property type="project" value="UniProtKB"/>
</dbReference>
<dbReference type="GO" id="GO:0003743">
    <property type="term" value="F:translation initiation factor activity"/>
    <property type="evidence" value="ECO:0000318"/>
    <property type="project" value="GO_Central"/>
</dbReference>
<dbReference type="GO" id="GO:0002183">
    <property type="term" value="P:cytoplasmic translational initiation"/>
    <property type="evidence" value="ECO:0000250"/>
    <property type="project" value="UniProtKB"/>
</dbReference>
<dbReference type="CDD" id="cd04198">
    <property type="entry name" value="eIF-2B_gamma_N"/>
    <property type="match status" value="1"/>
</dbReference>
<dbReference type="Gene3D" id="2.160.10.10">
    <property type="entry name" value="Hexapeptide repeat proteins"/>
    <property type="match status" value="1"/>
</dbReference>
<dbReference type="Gene3D" id="3.90.550.10">
    <property type="entry name" value="Spore Coat Polysaccharide Biosynthesis Protein SpsA, Chain A"/>
    <property type="match status" value="1"/>
</dbReference>
<dbReference type="InterPro" id="IPR051960">
    <property type="entry name" value="eIF2B_gamma"/>
</dbReference>
<dbReference type="InterPro" id="IPR005835">
    <property type="entry name" value="NTP_transferase_dom"/>
</dbReference>
<dbReference type="InterPro" id="IPR029044">
    <property type="entry name" value="Nucleotide-diphossugar_trans"/>
</dbReference>
<dbReference type="PANTHER" id="PTHR45989">
    <property type="entry name" value="TRANSLATION INITIATION FACTOR EIF-2B SUBUNIT GAMMA"/>
    <property type="match status" value="1"/>
</dbReference>
<dbReference type="PANTHER" id="PTHR45989:SF1">
    <property type="entry name" value="TRANSLATION INITIATION FACTOR EIF-2B SUBUNIT GAMMA"/>
    <property type="match status" value="1"/>
</dbReference>
<dbReference type="Pfam" id="PF25084">
    <property type="entry name" value="LbH_EIF2B"/>
    <property type="match status" value="1"/>
</dbReference>
<dbReference type="Pfam" id="PF00483">
    <property type="entry name" value="NTP_transferase"/>
    <property type="match status" value="1"/>
</dbReference>
<dbReference type="SUPFAM" id="SSF53448">
    <property type="entry name" value="Nucleotide-diphospho-sugar transferases"/>
    <property type="match status" value="1"/>
</dbReference>
<gene>
    <name type="primary">eif2b3</name>
    <name type="ORF">DDB_G0290693</name>
</gene>
<organism>
    <name type="scientific">Dictyostelium discoideum</name>
    <name type="common">Social amoeba</name>
    <dbReference type="NCBI Taxonomy" id="44689"/>
    <lineage>
        <taxon>Eukaryota</taxon>
        <taxon>Amoebozoa</taxon>
        <taxon>Evosea</taxon>
        <taxon>Eumycetozoa</taxon>
        <taxon>Dictyostelia</taxon>
        <taxon>Dictyosteliales</taxon>
        <taxon>Dictyosteliaceae</taxon>
        <taxon>Dictyostelium</taxon>
    </lineage>
</organism>
<reference key="1">
    <citation type="journal article" date="2005" name="Nature">
        <title>The genome of the social amoeba Dictyostelium discoideum.</title>
        <authorList>
            <person name="Eichinger L."/>
            <person name="Pachebat J.A."/>
            <person name="Gloeckner G."/>
            <person name="Rajandream M.A."/>
            <person name="Sucgang R."/>
            <person name="Berriman M."/>
            <person name="Song J."/>
            <person name="Olsen R."/>
            <person name="Szafranski K."/>
            <person name="Xu Q."/>
            <person name="Tunggal B."/>
            <person name="Kummerfeld S."/>
            <person name="Madera M."/>
            <person name="Konfortov B.A."/>
            <person name="Rivero F."/>
            <person name="Bankier A.T."/>
            <person name="Lehmann R."/>
            <person name="Hamlin N."/>
            <person name="Davies R."/>
            <person name="Gaudet P."/>
            <person name="Fey P."/>
            <person name="Pilcher K."/>
            <person name="Chen G."/>
            <person name="Saunders D."/>
            <person name="Sodergren E.J."/>
            <person name="Davis P."/>
            <person name="Kerhornou A."/>
            <person name="Nie X."/>
            <person name="Hall N."/>
            <person name="Anjard C."/>
            <person name="Hemphill L."/>
            <person name="Bason N."/>
            <person name="Farbrother P."/>
            <person name="Desany B."/>
            <person name="Just E."/>
            <person name="Morio T."/>
            <person name="Rost R."/>
            <person name="Churcher C.M."/>
            <person name="Cooper J."/>
            <person name="Haydock S."/>
            <person name="van Driessche N."/>
            <person name="Cronin A."/>
            <person name="Goodhead I."/>
            <person name="Muzny D.M."/>
            <person name="Mourier T."/>
            <person name="Pain A."/>
            <person name="Lu M."/>
            <person name="Harper D."/>
            <person name="Lindsay R."/>
            <person name="Hauser H."/>
            <person name="James K.D."/>
            <person name="Quiles M."/>
            <person name="Madan Babu M."/>
            <person name="Saito T."/>
            <person name="Buchrieser C."/>
            <person name="Wardroper A."/>
            <person name="Felder M."/>
            <person name="Thangavelu M."/>
            <person name="Johnson D."/>
            <person name="Knights A."/>
            <person name="Loulseged H."/>
            <person name="Mungall K.L."/>
            <person name="Oliver K."/>
            <person name="Price C."/>
            <person name="Quail M.A."/>
            <person name="Urushihara H."/>
            <person name="Hernandez J."/>
            <person name="Rabbinowitsch E."/>
            <person name="Steffen D."/>
            <person name="Sanders M."/>
            <person name="Ma J."/>
            <person name="Kohara Y."/>
            <person name="Sharp S."/>
            <person name="Simmonds M.N."/>
            <person name="Spiegler S."/>
            <person name="Tivey A."/>
            <person name="Sugano S."/>
            <person name="White B."/>
            <person name="Walker D."/>
            <person name="Woodward J.R."/>
            <person name="Winckler T."/>
            <person name="Tanaka Y."/>
            <person name="Shaulsky G."/>
            <person name="Schleicher M."/>
            <person name="Weinstock G.M."/>
            <person name="Rosenthal A."/>
            <person name="Cox E.C."/>
            <person name="Chisholm R.L."/>
            <person name="Gibbs R.A."/>
            <person name="Loomis W.F."/>
            <person name="Platzer M."/>
            <person name="Kay R.R."/>
            <person name="Williams J.G."/>
            <person name="Dear P.H."/>
            <person name="Noegel A.A."/>
            <person name="Barrell B.G."/>
            <person name="Kuspa A."/>
        </authorList>
    </citation>
    <scope>NUCLEOTIDE SEQUENCE [LARGE SCALE GENOMIC DNA]</scope>
    <source>
        <strain>AX4</strain>
    </source>
</reference>
<keyword id="KW-0963">Cytoplasm</keyword>
<keyword id="KW-0396">Initiation factor</keyword>
<keyword id="KW-0648">Protein biosynthesis</keyword>
<keyword id="KW-1185">Reference proteome</keyword>
<comment type="function">
    <text evidence="2">Acts as a component of the translation initiation factor 2B (eIF2B) complex, which catalyzes the exchange of GDP for GTP on the eukaryotic initiation factor 2 (eIF2) complex gamma subunit. Its guanine nucleotide exchange factor activity is repressed when bound to eIF2 complex phosphorylated on the alpha subunit, thereby limiting the amount of methionyl-initiator methionine tRNA available to the ribosome and consequently global translation is repressed.</text>
</comment>
<comment type="subunit">
    <text evidence="2">Component of the translation initiation factor 2B (eIF2B) complex which is a heterodecamer of two sets of five different subunits: alpha, beta, gamma, delta and epsilon. Subunits alpha, beta and delta comprise a regulatory subcomplex and subunits epsilon and gamma comprise a catalytic subcomplex. Within the complex, the hexameric regulatory complex resides at the center, with the two heterodimeric catalytic subcomplexes bound on opposite sides.</text>
</comment>
<comment type="subcellular location">
    <subcellularLocation>
        <location evidence="1">Cytoplasm</location>
        <location evidence="1">Cytosol</location>
    </subcellularLocation>
</comment>
<comment type="similarity">
    <text evidence="3">Belongs to the eIF-2B gamma/epsilon subunits family.</text>
</comment>
<protein>
    <recommendedName>
        <fullName>Translation initiation factor eIF2B subunit gamma</fullName>
    </recommendedName>
    <alternativeName>
        <fullName>eIF2B GDP-GTP exchange factor subunit gamma</fullName>
    </alternativeName>
</protein>
<sequence>MTQTQFQVVILATDKASGNSKLEPIDATIPHSLLPIANRPLISYQLEFLEKAGFETKSEPVIIVVNETSQEKIKQYVSEIYKGKIEVEFFVLKDQLATCEILYRIRDKIRLEYFMVLNANLVLEDTFIRQMADLHRKEESSLTVLLKPPTPKVEQKGKGATETSTKQDKLFTDYIALEEKSQKIVMMEPATEVEEDLNFNKSLLKYFPNVTIYTNLQDTQLYIFSRWVLDLIIEDQKEKYPLFFDIKKHLIPYLLSCQIPNIKRKRALPASAFNQNQTLSQTMSSTTSPFDQFSELNAQKNKTIKCFAHLLKKEGYCMNVNTIKNYQQINRDIAKGDLQYLPNEPKSEKNFFIDPTANVTITQVGPQCVIGTSTTLGAKCSVKFSIIGKHCKIGDGVRIENSIIMDHVIIEDRCVINSSIICNDVYIKSGSSTVGQYLTK</sequence>